<accession>Q6A7V3</accession>
<feature type="chain" id="PRO_0000177202" description="Large ribosomal subunit protein bL20">
    <location>
        <begin position="1"/>
        <end position="123"/>
    </location>
</feature>
<feature type="region of interest" description="Disordered" evidence="2">
    <location>
        <begin position="1"/>
        <end position="23"/>
    </location>
</feature>
<feature type="compositionally biased region" description="Basic residues" evidence="2">
    <location>
        <begin position="1"/>
        <end position="15"/>
    </location>
</feature>
<feature type="helix" evidence="4">
    <location>
        <begin position="7"/>
        <end position="20"/>
    </location>
</feature>
<feature type="turn" evidence="4">
    <location>
        <begin position="21"/>
        <end position="23"/>
    </location>
</feature>
<feature type="helix" evidence="4">
    <location>
        <begin position="26"/>
        <end position="29"/>
    </location>
</feature>
<feature type="helix" evidence="4">
    <location>
        <begin position="32"/>
        <end position="70"/>
    </location>
</feature>
<feature type="turn" evidence="4">
    <location>
        <begin position="71"/>
        <end position="73"/>
    </location>
</feature>
<feature type="helix" evidence="4">
    <location>
        <begin position="76"/>
        <end position="86"/>
    </location>
</feature>
<feature type="helix" evidence="4">
    <location>
        <begin position="94"/>
        <end position="100"/>
    </location>
</feature>
<feature type="helix" evidence="4">
    <location>
        <begin position="103"/>
        <end position="116"/>
    </location>
</feature>
<name>RL20_CUTAK</name>
<keyword id="KW-0002">3D-structure</keyword>
<keyword id="KW-0687">Ribonucleoprotein</keyword>
<keyword id="KW-0689">Ribosomal protein</keyword>
<keyword id="KW-0694">RNA-binding</keyword>
<keyword id="KW-0699">rRNA-binding</keyword>
<dbReference type="EMBL" id="AE017283">
    <property type="protein sequence ID" value="AAT83162.1"/>
    <property type="molecule type" value="Genomic_DNA"/>
</dbReference>
<dbReference type="RefSeq" id="WP_002514221.1">
    <property type="nucleotide sequence ID" value="NZ_CP025935.1"/>
</dbReference>
<dbReference type="PDB" id="8CRX">
    <property type="method" value="EM"/>
    <property type="resolution" value="2.78 A"/>
    <property type="chains" value="p=1-123"/>
</dbReference>
<dbReference type="PDB" id="8CVM">
    <property type="method" value="EM"/>
    <property type="resolution" value="2.66 A"/>
    <property type="chains" value="p=1-123"/>
</dbReference>
<dbReference type="PDBsum" id="8CRX"/>
<dbReference type="PDBsum" id="8CVM"/>
<dbReference type="SMR" id="Q6A7V3"/>
<dbReference type="EnsemblBacteria" id="AAT83162">
    <property type="protein sequence ID" value="AAT83162"/>
    <property type="gene ID" value="PPA1412"/>
</dbReference>
<dbReference type="KEGG" id="pac:PPA1412"/>
<dbReference type="eggNOG" id="COG0292">
    <property type="taxonomic scope" value="Bacteria"/>
</dbReference>
<dbReference type="HOGENOM" id="CLU_123265_0_0_11"/>
<dbReference type="Proteomes" id="UP000000603">
    <property type="component" value="Chromosome"/>
</dbReference>
<dbReference type="GO" id="GO:1990904">
    <property type="term" value="C:ribonucleoprotein complex"/>
    <property type="evidence" value="ECO:0007669"/>
    <property type="project" value="UniProtKB-KW"/>
</dbReference>
<dbReference type="GO" id="GO:0005840">
    <property type="term" value="C:ribosome"/>
    <property type="evidence" value="ECO:0007669"/>
    <property type="project" value="UniProtKB-KW"/>
</dbReference>
<dbReference type="GO" id="GO:0019843">
    <property type="term" value="F:rRNA binding"/>
    <property type="evidence" value="ECO:0007669"/>
    <property type="project" value="UniProtKB-UniRule"/>
</dbReference>
<dbReference type="GO" id="GO:0003735">
    <property type="term" value="F:structural constituent of ribosome"/>
    <property type="evidence" value="ECO:0007669"/>
    <property type="project" value="InterPro"/>
</dbReference>
<dbReference type="GO" id="GO:0000027">
    <property type="term" value="P:ribosomal large subunit assembly"/>
    <property type="evidence" value="ECO:0007669"/>
    <property type="project" value="UniProtKB-UniRule"/>
</dbReference>
<dbReference type="GO" id="GO:0006412">
    <property type="term" value="P:translation"/>
    <property type="evidence" value="ECO:0007669"/>
    <property type="project" value="InterPro"/>
</dbReference>
<dbReference type="CDD" id="cd07026">
    <property type="entry name" value="Ribosomal_L20"/>
    <property type="match status" value="1"/>
</dbReference>
<dbReference type="FunFam" id="1.10.1900.20:FF:000001">
    <property type="entry name" value="50S ribosomal protein L20"/>
    <property type="match status" value="1"/>
</dbReference>
<dbReference type="Gene3D" id="6.10.160.10">
    <property type="match status" value="1"/>
</dbReference>
<dbReference type="Gene3D" id="1.10.1900.20">
    <property type="entry name" value="Ribosomal protein L20"/>
    <property type="match status" value="1"/>
</dbReference>
<dbReference type="HAMAP" id="MF_00382">
    <property type="entry name" value="Ribosomal_bL20"/>
    <property type="match status" value="1"/>
</dbReference>
<dbReference type="InterPro" id="IPR005813">
    <property type="entry name" value="Ribosomal_bL20"/>
</dbReference>
<dbReference type="InterPro" id="IPR049946">
    <property type="entry name" value="RIBOSOMAL_L20_CS"/>
</dbReference>
<dbReference type="InterPro" id="IPR035566">
    <property type="entry name" value="Ribosomal_protein_bL20_C"/>
</dbReference>
<dbReference type="NCBIfam" id="TIGR01032">
    <property type="entry name" value="rplT_bact"/>
    <property type="match status" value="1"/>
</dbReference>
<dbReference type="PANTHER" id="PTHR10986">
    <property type="entry name" value="39S RIBOSOMAL PROTEIN L20"/>
    <property type="match status" value="1"/>
</dbReference>
<dbReference type="Pfam" id="PF00453">
    <property type="entry name" value="Ribosomal_L20"/>
    <property type="match status" value="1"/>
</dbReference>
<dbReference type="PRINTS" id="PR00062">
    <property type="entry name" value="RIBOSOMALL20"/>
</dbReference>
<dbReference type="SUPFAM" id="SSF74731">
    <property type="entry name" value="Ribosomal protein L20"/>
    <property type="match status" value="1"/>
</dbReference>
<dbReference type="PROSITE" id="PS00937">
    <property type="entry name" value="RIBOSOMAL_L20"/>
    <property type="match status" value="1"/>
</dbReference>
<gene>
    <name evidence="1" type="primary">rplT</name>
    <name type="ordered locus">PPA1412</name>
</gene>
<organism>
    <name type="scientific">Cutibacterium acnes (strain DSM 16379 / KPA171202)</name>
    <name type="common">Propionibacterium acnes</name>
    <dbReference type="NCBI Taxonomy" id="267747"/>
    <lineage>
        <taxon>Bacteria</taxon>
        <taxon>Bacillati</taxon>
        <taxon>Actinomycetota</taxon>
        <taxon>Actinomycetes</taxon>
        <taxon>Propionibacteriales</taxon>
        <taxon>Propionibacteriaceae</taxon>
        <taxon>Cutibacterium</taxon>
    </lineage>
</organism>
<protein>
    <recommendedName>
        <fullName evidence="1">Large ribosomal subunit protein bL20</fullName>
    </recommendedName>
    <alternativeName>
        <fullName evidence="3">50S ribosomal protein L20</fullName>
    </alternativeName>
</protein>
<proteinExistence type="evidence at protein level"/>
<sequence length="123" mass="13987">MARVKRSVNAKKKRREVLDQASGYRGQRSRLYRKAKEQTLHSATYSFRDRRAKKGDFRSLWIQRINAASRAQGMTYNRFINGLKNAGVEVDRKMLAELAVSDINAFNSLVEVAKANQPQNAAA</sequence>
<reference key="1">
    <citation type="journal article" date="2004" name="Science">
        <title>The complete genome sequence of Propionibacterium acnes, a commensal of human skin.</title>
        <authorList>
            <person name="Brueggemann H."/>
            <person name="Henne A."/>
            <person name="Hoster F."/>
            <person name="Liesegang H."/>
            <person name="Wiezer A."/>
            <person name="Strittmatter A."/>
            <person name="Hujer S."/>
            <person name="Duerre P."/>
            <person name="Gottschalk G."/>
        </authorList>
    </citation>
    <scope>NUCLEOTIDE SEQUENCE [LARGE SCALE GENOMIC DNA]</scope>
    <source>
        <strain>DSM 16379 / KPA171202</strain>
    </source>
</reference>
<comment type="function">
    <text evidence="1">Binds directly to 23S ribosomal RNA and is necessary for the in vitro assembly process of the 50S ribosomal subunit. It is not involved in the protein synthesizing functions of that subunit.</text>
</comment>
<comment type="similarity">
    <text evidence="1">Belongs to the bacterial ribosomal protein bL20 family.</text>
</comment>
<evidence type="ECO:0000255" key="1">
    <source>
        <dbReference type="HAMAP-Rule" id="MF_00382"/>
    </source>
</evidence>
<evidence type="ECO:0000256" key="2">
    <source>
        <dbReference type="SAM" id="MobiDB-lite"/>
    </source>
</evidence>
<evidence type="ECO:0000305" key="3"/>
<evidence type="ECO:0007829" key="4">
    <source>
        <dbReference type="PDB" id="8CVM"/>
    </source>
</evidence>